<feature type="chain" id="PRO_1000200623" description="NAD(P)H dehydrogenase (quinone)">
    <location>
        <begin position="1"/>
        <end position="198"/>
    </location>
</feature>
<feature type="domain" description="Flavodoxin-like" evidence="1">
    <location>
        <begin position="4"/>
        <end position="189"/>
    </location>
</feature>
<feature type="binding site" evidence="1">
    <location>
        <begin position="10"/>
        <end position="15"/>
    </location>
    <ligand>
        <name>FMN</name>
        <dbReference type="ChEBI" id="CHEBI:58210"/>
    </ligand>
</feature>
<feature type="binding site" evidence="1">
    <location>
        <position position="12"/>
    </location>
    <ligand>
        <name>NAD(+)</name>
        <dbReference type="ChEBI" id="CHEBI:57540"/>
    </ligand>
</feature>
<feature type="binding site" evidence="1">
    <location>
        <begin position="78"/>
        <end position="80"/>
    </location>
    <ligand>
        <name>FMN</name>
        <dbReference type="ChEBI" id="CHEBI:58210"/>
    </ligand>
</feature>
<feature type="binding site" evidence="1">
    <location>
        <position position="98"/>
    </location>
    <ligand>
        <name>substrate</name>
    </ligand>
</feature>
<feature type="binding site" evidence="1">
    <location>
        <begin position="113"/>
        <end position="118"/>
    </location>
    <ligand>
        <name>FMN</name>
        <dbReference type="ChEBI" id="CHEBI:58210"/>
    </ligand>
</feature>
<feature type="binding site" evidence="1">
    <location>
        <position position="133"/>
    </location>
    <ligand>
        <name>FMN</name>
        <dbReference type="ChEBI" id="CHEBI:58210"/>
    </ligand>
</feature>
<keyword id="KW-0285">Flavoprotein</keyword>
<keyword id="KW-0288">FMN</keyword>
<keyword id="KW-0520">NAD</keyword>
<keyword id="KW-0521">NADP</keyword>
<keyword id="KW-0547">Nucleotide-binding</keyword>
<keyword id="KW-0560">Oxidoreductase</keyword>
<name>NQOR_ECOSE</name>
<protein>
    <recommendedName>
        <fullName evidence="1">NAD(P)H dehydrogenase (quinone)</fullName>
        <ecNumber evidence="1">1.6.5.2</ecNumber>
    </recommendedName>
    <alternativeName>
        <fullName>Flavoprotein WrbA</fullName>
    </alternativeName>
    <alternativeName>
        <fullName evidence="1">NAD(P)H:quinone oxidoreductase</fullName>
        <shortName evidence="1">NQO</shortName>
    </alternativeName>
</protein>
<evidence type="ECO:0000255" key="1">
    <source>
        <dbReference type="HAMAP-Rule" id="MF_01017"/>
    </source>
</evidence>
<organism>
    <name type="scientific">Escherichia coli (strain SE11)</name>
    <dbReference type="NCBI Taxonomy" id="409438"/>
    <lineage>
        <taxon>Bacteria</taxon>
        <taxon>Pseudomonadati</taxon>
        <taxon>Pseudomonadota</taxon>
        <taxon>Gammaproteobacteria</taxon>
        <taxon>Enterobacterales</taxon>
        <taxon>Enterobacteriaceae</taxon>
        <taxon>Escherichia</taxon>
    </lineage>
</organism>
<proteinExistence type="inferred from homology"/>
<comment type="catalytic activity">
    <reaction evidence="1">
        <text>a quinone + NADH + H(+) = a quinol + NAD(+)</text>
        <dbReference type="Rhea" id="RHEA:46160"/>
        <dbReference type="ChEBI" id="CHEBI:15378"/>
        <dbReference type="ChEBI" id="CHEBI:24646"/>
        <dbReference type="ChEBI" id="CHEBI:57540"/>
        <dbReference type="ChEBI" id="CHEBI:57945"/>
        <dbReference type="ChEBI" id="CHEBI:132124"/>
        <dbReference type="EC" id="1.6.5.2"/>
    </reaction>
</comment>
<comment type="catalytic activity">
    <reaction evidence="1">
        <text>a quinone + NADPH + H(+) = a quinol + NADP(+)</text>
        <dbReference type="Rhea" id="RHEA:46164"/>
        <dbReference type="ChEBI" id="CHEBI:15378"/>
        <dbReference type="ChEBI" id="CHEBI:24646"/>
        <dbReference type="ChEBI" id="CHEBI:57783"/>
        <dbReference type="ChEBI" id="CHEBI:58349"/>
        <dbReference type="ChEBI" id="CHEBI:132124"/>
        <dbReference type="EC" id="1.6.5.2"/>
    </reaction>
</comment>
<comment type="cofactor">
    <cofactor evidence="1">
        <name>FMN</name>
        <dbReference type="ChEBI" id="CHEBI:58210"/>
    </cofactor>
    <text evidence="1">Binds 1 FMN per monomer.</text>
</comment>
<comment type="similarity">
    <text evidence="1">Belongs to the WrbA family.</text>
</comment>
<reference key="1">
    <citation type="journal article" date="2008" name="DNA Res.">
        <title>Complete genome sequence and comparative analysis of the wild-type commensal Escherichia coli strain SE11 isolated from a healthy adult.</title>
        <authorList>
            <person name="Oshima K."/>
            <person name="Toh H."/>
            <person name="Ogura Y."/>
            <person name="Sasamoto H."/>
            <person name="Morita H."/>
            <person name="Park S.-H."/>
            <person name="Ooka T."/>
            <person name="Iyoda S."/>
            <person name="Taylor T.D."/>
            <person name="Hayashi T."/>
            <person name="Itoh K."/>
            <person name="Hattori M."/>
        </authorList>
    </citation>
    <scope>NUCLEOTIDE SEQUENCE [LARGE SCALE GENOMIC DNA]</scope>
    <source>
        <strain>SE11</strain>
    </source>
</reference>
<dbReference type="EC" id="1.6.5.2" evidence="1"/>
<dbReference type="EMBL" id="AP009240">
    <property type="protein sequence ID" value="BAG76590.1"/>
    <property type="molecule type" value="Genomic_DNA"/>
</dbReference>
<dbReference type="SMR" id="B6I980"/>
<dbReference type="KEGG" id="ecy:ECSE_1066"/>
<dbReference type="HOGENOM" id="CLU_051402_0_2_6"/>
<dbReference type="Proteomes" id="UP000008199">
    <property type="component" value="Chromosome"/>
</dbReference>
<dbReference type="GO" id="GO:0016020">
    <property type="term" value="C:membrane"/>
    <property type="evidence" value="ECO:0007669"/>
    <property type="project" value="TreeGrafter"/>
</dbReference>
<dbReference type="GO" id="GO:0050660">
    <property type="term" value="F:flavin adenine dinucleotide binding"/>
    <property type="evidence" value="ECO:0007669"/>
    <property type="project" value="UniProtKB-UniRule"/>
</dbReference>
<dbReference type="GO" id="GO:0010181">
    <property type="term" value="F:FMN binding"/>
    <property type="evidence" value="ECO:0007669"/>
    <property type="project" value="InterPro"/>
</dbReference>
<dbReference type="GO" id="GO:0051287">
    <property type="term" value="F:NAD binding"/>
    <property type="evidence" value="ECO:0007669"/>
    <property type="project" value="UniProtKB-UniRule"/>
</dbReference>
<dbReference type="GO" id="GO:0050136">
    <property type="term" value="F:NADH:ubiquinone reductase (non-electrogenic) activity"/>
    <property type="evidence" value="ECO:0007669"/>
    <property type="project" value="RHEA"/>
</dbReference>
<dbReference type="GO" id="GO:0050661">
    <property type="term" value="F:NADP binding"/>
    <property type="evidence" value="ECO:0007669"/>
    <property type="project" value="UniProtKB-UniRule"/>
</dbReference>
<dbReference type="GO" id="GO:0008753">
    <property type="term" value="F:NADPH dehydrogenase (quinone) activity"/>
    <property type="evidence" value="ECO:0007669"/>
    <property type="project" value="RHEA"/>
</dbReference>
<dbReference type="FunFam" id="3.40.50.360:FF:000004">
    <property type="entry name" value="NAD(P)H dehydrogenase (quinone)"/>
    <property type="match status" value="1"/>
</dbReference>
<dbReference type="Gene3D" id="3.40.50.360">
    <property type="match status" value="1"/>
</dbReference>
<dbReference type="HAMAP" id="MF_01017">
    <property type="entry name" value="NQOR"/>
    <property type="match status" value="1"/>
</dbReference>
<dbReference type="InterPro" id="IPR008254">
    <property type="entry name" value="Flavodoxin/NO_synth"/>
</dbReference>
<dbReference type="InterPro" id="IPR029039">
    <property type="entry name" value="Flavoprotein-like_sf"/>
</dbReference>
<dbReference type="InterPro" id="IPR010089">
    <property type="entry name" value="Flavoprotein_WrbA-like"/>
</dbReference>
<dbReference type="InterPro" id="IPR005025">
    <property type="entry name" value="FMN_Rdtase-like_dom"/>
</dbReference>
<dbReference type="InterPro" id="IPR037513">
    <property type="entry name" value="NQO"/>
</dbReference>
<dbReference type="NCBIfam" id="TIGR01755">
    <property type="entry name" value="flav_wrbA"/>
    <property type="match status" value="1"/>
</dbReference>
<dbReference type="NCBIfam" id="NF002999">
    <property type="entry name" value="PRK03767.1"/>
    <property type="match status" value="1"/>
</dbReference>
<dbReference type="PANTHER" id="PTHR30546">
    <property type="entry name" value="FLAVODOXIN-RELATED PROTEIN WRBA-RELATED"/>
    <property type="match status" value="1"/>
</dbReference>
<dbReference type="PANTHER" id="PTHR30546:SF23">
    <property type="entry name" value="FLAVOPROTEIN-LIKE PROTEIN YCP4-RELATED"/>
    <property type="match status" value="1"/>
</dbReference>
<dbReference type="Pfam" id="PF03358">
    <property type="entry name" value="FMN_red"/>
    <property type="match status" value="1"/>
</dbReference>
<dbReference type="SUPFAM" id="SSF52218">
    <property type="entry name" value="Flavoproteins"/>
    <property type="match status" value="1"/>
</dbReference>
<dbReference type="PROSITE" id="PS50902">
    <property type="entry name" value="FLAVODOXIN_LIKE"/>
    <property type="match status" value="1"/>
</dbReference>
<sequence length="198" mass="20846">MAKVLVLYYSMYGHIETMARAVAEGASKVDGAEVVVKRVPETMPPQLFEKAGGKTQTAPVATPQELADYDAIIFGTPTRFGNMSGQMRTFLDQTGGLWASGALYGKLASVFSSTGTGGGQEQTITSTWTTLAHHGMVIVPIGYAAQELFDVSQVRGGTPYGATTIAGGDGSRQPSQEELSIARYQGEYVAGLAVKLNG</sequence>
<gene>
    <name type="ordered locus">ECSE_1066</name>
</gene>
<accession>B6I980</accession>